<dbReference type="EMBL" id="CP000139">
    <property type="protein sequence ID" value="ABR38904.1"/>
    <property type="molecule type" value="Genomic_DNA"/>
</dbReference>
<dbReference type="RefSeq" id="WP_005843914.1">
    <property type="nucleotide sequence ID" value="NZ_CAXUIZ010000015.1"/>
</dbReference>
<dbReference type="SMR" id="A6KZP0"/>
<dbReference type="STRING" id="435590.BVU_1214"/>
<dbReference type="PaxDb" id="435590-BVU_1214"/>
<dbReference type="GeneID" id="5302180"/>
<dbReference type="KEGG" id="bvu:BVU_1214"/>
<dbReference type="eggNOG" id="COG0445">
    <property type="taxonomic scope" value="Bacteria"/>
</dbReference>
<dbReference type="HOGENOM" id="CLU_007831_2_2_10"/>
<dbReference type="BioCyc" id="BVUL435590:G1G59-1264-MONOMER"/>
<dbReference type="Proteomes" id="UP000002861">
    <property type="component" value="Chromosome"/>
</dbReference>
<dbReference type="GO" id="GO:0005829">
    <property type="term" value="C:cytosol"/>
    <property type="evidence" value="ECO:0007669"/>
    <property type="project" value="TreeGrafter"/>
</dbReference>
<dbReference type="GO" id="GO:0050660">
    <property type="term" value="F:flavin adenine dinucleotide binding"/>
    <property type="evidence" value="ECO:0007669"/>
    <property type="project" value="UniProtKB-UniRule"/>
</dbReference>
<dbReference type="GO" id="GO:0030488">
    <property type="term" value="P:tRNA methylation"/>
    <property type="evidence" value="ECO:0007669"/>
    <property type="project" value="TreeGrafter"/>
</dbReference>
<dbReference type="GO" id="GO:0002098">
    <property type="term" value="P:tRNA wobble uridine modification"/>
    <property type="evidence" value="ECO:0007669"/>
    <property type="project" value="InterPro"/>
</dbReference>
<dbReference type="FunFam" id="1.10.10.1800:FF:000003">
    <property type="entry name" value="tRNA uridine 5-carboxymethylaminomethyl modification enzyme MnmG"/>
    <property type="match status" value="1"/>
</dbReference>
<dbReference type="FunFam" id="1.10.150.570:FF:000001">
    <property type="entry name" value="tRNA uridine 5-carboxymethylaminomethyl modification enzyme MnmG"/>
    <property type="match status" value="1"/>
</dbReference>
<dbReference type="FunFam" id="3.50.50.60:FF:000002">
    <property type="entry name" value="tRNA uridine 5-carboxymethylaminomethyl modification enzyme MnmG"/>
    <property type="match status" value="1"/>
</dbReference>
<dbReference type="FunFam" id="3.50.50.60:FF:000010">
    <property type="entry name" value="tRNA uridine 5-carboxymethylaminomethyl modification enzyme MnmG"/>
    <property type="match status" value="1"/>
</dbReference>
<dbReference type="Gene3D" id="3.50.50.60">
    <property type="entry name" value="FAD/NAD(P)-binding domain"/>
    <property type="match status" value="2"/>
</dbReference>
<dbReference type="Gene3D" id="1.10.150.570">
    <property type="entry name" value="GidA associated domain, C-terminal subdomain"/>
    <property type="match status" value="1"/>
</dbReference>
<dbReference type="Gene3D" id="1.10.10.1800">
    <property type="entry name" value="tRNA uridine 5-carboxymethylaminomethyl modification enzyme MnmG/GidA"/>
    <property type="match status" value="1"/>
</dbReference>
<dbReference type="HAMAP" id="MF_00129">
    <property type="entry name" value="MnmG_GidA"/>
    <property type="match status" value="1"/>
</dbReference>
<dbReference type="InterPro" id="IPR036188">
    <property type="entry name" value="FAD/NAD-bd_sf"/>
</dbReference>
<dbReference type="InterPro" id="IPR049312">
    <property type="entry name" value="GIDA_C_N"/>
</dbReference>
<dbReference type="InterPro" id="IPR004416">
    <property type="entry name" value="MnmG"/>
</dbReference>
<dbReference type="InterPro" id="IPR002218">
    <property type="entry name" value="MnmG-rel"/>
</dbReference>
<dbReference type="InterPro" id="IPR020595">
    <property type="entry name" value="MnmG-rel_CS"/>
</dbReference>
<dbReference type="InterPro" id="IPR026904">
    <property type="entry name" value="MnmG_C"/>
</dbReference>
<dbReference type="InterPro" id="IPR047001">
    <property type="entry name" value="MnmG_C_subdom"/>
</dbReference>
<dbReference type="InterPro" id="IPR044920">
    <property type="entry name" value="MnmG_C_subdom_sf"/>
</dbReference>
<dbReference type="InterPro" id="IPR040131">
    <property type="entry name" value="MnmG_N"/>
</dbReference>
<dbReference type="NCBIfam" id="TIGR00136">
    <property type="entry name" value="mnmG_gidA"/>
    <property type="match status" value="1"/>
</dbReference>
<dbReference type="PANTHER" id="PTHR11806">
    <property type="entry name" value="GLUCOSE INHIBITED DIVISION PROTEIN A"/>
    <property type="match status" value="1"/>
</dbReference>
<dbReference type="PANTHER" id="PTHR11806:SF0">
    <property type="entry name" value="PROTEIN MTO1 HOMOLOG, MITOCHONDRIAL"/>
    <property type="match status" value="1"/>
</dbReference>
<dbReference type="Pfam" id="PF01134">
    <property type="entry name" value="GIDA"/>
    <property type="match status" value="1"/>
</dbReference>
<dbReference type="Pfam" id="PF21680">
    <property type="entry name" value="GIDA_C_1st"/>
    <property type="match status" value="1"/>
</dbReference>
<dbReference type="Pfam" id="PF13932">
    <property type="entry name" value="SAM_GIDA_C"/>
    <property type="match status" value="1"/>
</dbReference>
<dbReference type="SMART" id="SM01228">
    <property type="entry name" value="GIDA_assoc_3"/>
    <property type="match status" value="1"/>
</dbReference>
<dbReference type="SUPFAM" id="SSF51905">
    <property type="entry name" value="FAD/NAD(P)-binding domain"/>
    <property type="match status" value="1"/>
</dbReference>
<dbReference type="PROSITE" id="PS01280">
    <property type="entry name" value="GIDA_1"/>
    <property type="match status" value="1"/>
</dbReference>
<dbReference type="PROSITE" id="PS01281">
    <property type="entry name" value="GIDA_2"/>
    <property type="match status" value="1"/>
</dbReference>
<gene>
    <name evidence="1" type="primary">mnmG</name>
    <name evidence="1" type="synonym">gidA</name>
    <name type="ordered locus">BVU_1214</name>
</gene>
<organism>
    <name type="scientific">Phocaeicola vulgatus (strain ATCC 8482 / DSM 1447 / JCM 5826 / CCUG 4940 / NBRC 14291 / NCTC 11154)</name>
    <name type="common">Bacteroides vulgatus</name>
    <dbReference type="NCBI Taxonomy" id="435590"/>
    <lineage>
        <taxon>Bacteria</taxon>
        <taxon>Pseudomonadati</taxon>
        <taxon>Bacteroidota</taxon>
        <taxon>Bacteroidia</taxon>
        <taxon>Bacteroidales</taxon>
        <taxon>Bacteroidaceae</taxon>
        <taxon>Phocaeicola</taxon>
    </lineage>
</organism>
<sequence length="623" mass="69611">MDFKYDVIVIGAGHAGCEAAAAAANMGSKTCLITMDMNKIGQMSCNPAVGGIAKGQIVREIDALGGYMGLVTDRTAIQFRMLNRSKGPAMWSPRAQCDRGKFIWAWREILENTPNLHIWQDTVEELIVENGEATGVMTCWGVTFHAKCIVLTAGTFLNGLMHIGHKQLAGGRMAEPASYHLTESITRHGITAGRMKTGTPVRIDGRSVHYDLMETQDGENDFHRFSFMSEPRKLKQLQCWTCFTNEEVHEILRKGLPDSPLFNGQIQSIGPRYCPSIETKIVTFPDKPQHQLFLEPEGETTQELYLNGFSSSLPMDIQLAALKKVPAFKDLVVYRPGYAIEYDYFDPTQLKHTLESKIIKNLFLAGQVNGTTGYEEAGGQGIIAGINAHINCHGGEPFTLGRDEAYIGVLIDDLVTKGVDEPYRMFTSRAEYRILLRQDDADMRLTERAYKLGLVKQDRYEHLCSKREAVNQIIDFAKTFSIKAALINDALESLGTARLTHGCKLIDLLNRPQITIENIAGHIPAFKAMLDQITDRKEEVIEAAEVLIKYQGYIDRERMIADKIHRLEAIRIKGKFDYNSLNSLSTEARQKLMKIDPETLAQASRIPGISPSDINVLLVLLGR</sequence>
<comment type="function">
    <text evidence="1">NAD-binding protein involved in the addition of a carboxymethylaminomethyl (cmnm) group at the wobble position (U34) of certain tRNAs, forming tRNA-cmnm(5)s(2)U34.</text>
</comment>
<comment type="cofactor">
    <cofactor evidence="1">
        <name>FAD</name>
        <dbReference type="ChEBI" id="CHEBI:57692"/>
    </cofactor>
</comment>
<comment type="subunit">
    <text evidence="1">Homodimer. Heterotetramer of two MnmE and two MnmG subunits.</text>
</comment>
<comment type="subcellular location">
    <subcellularLocation>
        <location evidence="1">Cytoplasm</location>
    </subcellularLocation>
</comment>
<comment type="similarity">
    <text evidence="1">Belongs to the MnmG family.</text>
</comment>
<feature type="chain" id="PRO_1000016550" description="tRNA uridine 5-carboxymethylaminomethyl modification enzyme MnmG">
    <location>
        <begin position="1"/>
        <end position="623"/>
    </location>
</feature>
<feature type="binding site" evidence="1">
    <location>
        <begin position="11"/>
        <end position="16"/>
    </location>
    <ligand>
        <name>FAD</name>
        <dbReference type="ChEBI" id="CHEBI:57692"/>
    </ligand>
</feature>
<feature type="binding site" evidence="1">
    <location>
        <position position="123"/>
    </location>
    <ligand>
        <name>FAD</name>
        <dbReference type="ChEBI" id="CHEBI:57692"/>
    </ligand>
</feature>
<feature type="binding site" evidence="1">
    <location>
        <position position="178"/>
    </location>
    <ligand>
        <name>FAD</name>
        <dbReference type="ChEBI" id="CHEBI:57692"/>
    </ligand>
</feature>
<feature type="binding site" evidence="1">
    <location>
        <begin position="270"/>
        <end position="284"/>
    </location>
    <ligand>
        <name>NAD(+)</name>
        <dbReference type="ChEBI" id="CHEBI:57540"/>
    </ligand>
</feature>
<feature type="binding site" evidence="1">
    <location>
        <position position="367"/>
    </location>
    <ligand>
        <name>FAD</name>
        <dbReference type="ChEBI" id="CHEBI:57692"/>
    </ligand>
</feature>
<protein>
    <recommendedName>
        <fullName evidence="1">tRNA uridine 5-carboxymethylaminomethyl modification enzyme MnmG</fullName>
    </recommendedName>
    <alternativeName>
        <fullName evidence="1">Glucose-inhibited division protein A</fullName>
    </alternativeName>
</protein>
<keyword id="KW-0963">Cytoplasm</keyword>
<keyword id="KW-0274">FAD</keyword>
<keyword id="KW-0285">Flavoprotein</keyword>
<keyword id="KW-0520">NAD</keyword>
<keyword id="KW-0819">tRNA processing</keyword>
<name>MNMG_PHOV8</name>
<evidence type="ECO:0000255" key="1">
    <source>
        <dbReference type="HAMAP-Rule" id="MF_00129"/>
    </source>
</evidence>
<proteinExistence type="inferred from homology"/>
<accession>A6KZP0</accession>
<reference key="1">
    <citation type="journal article" date="2007" name="PLoS Biol.">
        <title>Evolution of symbiotic bacteria in the distal human intestine.</title>
        <authorList>
            <person name="Xu J."/>
            <person name="Mahowald M.A."/>
            <person name="Ley R.E."/>
            <person name="Lozupone C.A."/>
            <person name="Hamady M."/>
            <person name="Martens E.C."/>
            <person name="Henrissat B."/>
            <person name="Coutinho P.M."/>
            <person name="Minx P."/>
            <person name="Latreille P."/>
            <person name="Cordum H."/>
            <person name="Van Brunt A."/>
            <person name="Kim K."/>
            <person name="Fulton R.S."/>
            <person name="Fulton L.A."/>
            <person name="Clifton S.W."/>
            <person name="Wilson R.K."/>
            <person name="Knight R.D."/>
            <person name="Gordon J.I."/>
        </authorList>
    </citation>
    <scope>NUCLEOTIDE SEQUENCE [LARGE SCALE GENOMIC DNA]</scope>
    <source>
        <strain>ATCC 8482 / DSM 1447 / JCM 5826 / CCUG 4940 / NBRC 14291 / NCTC 11154</strain>
    </source>
</reference>